<gene>
    <name type="ordered locus">BC_4790</name>
</gene>
<organism>
    <name type="scientific">Bacillus cereus (strain ATCC 14579 / DSM 31 / CCUG 7414 / JCM 2152 / NBRC 15305 / NCIMB 9373 / NCTC 2599 / NRRL B-3711)</name>
    <dbReference type="NCBI Taxonomy" id="226900"/>
    <lineage>
        <taxon>Bacteria</taxon>
        <taxon>Bacillati</taxon>
        <taxon>Bacillota</taxon>
        <taxon>Bacilli</taxon>
        <taxon>Bacillales</taxon>
        <taxon>Bacillaceae</taxon>
        <taxon>Bacillus</taxon>
        <taxon>Bacillus cereus group</taxon>
    </lineage>
</organism>
<sequence>MKQIFIGIIRFYQKFISPMTPPTCRFYPTCSHYGLEAFQKHGALKGFWLTCKRILKCHPFHPGGFDPVPDKKDDKVNS</sequence>
<comment type="function">
    <text evidence="1">Could be involved in insertion of integral membrane proteins into the membrane.</text>
</comment>
<comment type="subcellular location">
    <subcellularLocation>
        <location evidence="1">Cell membrane</location>
        <topology evidence="1">Peripheral membrane protein</topology>
        <orientation evidence="1">Cytoplasmic side</orientation>
    </subcellularLocation>
</comment>
<comment type="similarity">
    <text evidence="1">Belongs to the UPF0161 family.</text>
</comment>
<proteinExistence type="inferred from homology"/>
<name>YIDD_BACCR</name>
<feature type="chain" id="PRO_0000171791" description="Putative membrane protein insertion efficiency factor">
    <location>
        <begin position="1"/>
        <end position="78"/>
    </location>
</feature>
<keyword id="KW-1003">Cell membrane</keyword>
<keyword id="KW-0472">Membrane</keyword>
<keyword id="KW-1185">Reference proteome</keyword>
<evidence type="ECO:0000255" key="1">
    <source>
        <dbReference type="HAMAP-Rule" id="MF_00386"/>
    </source>
</evidence>
<reference key="1">
    <citation type="journal article" date="2003" name="Nature">
        <title>Genome sequence of Bacillus cereus and comparative analysis with Bacillus anthracis.</title>
        <authorList>
            <person name="Ivanova N."/>
            <person name="Sorokin A."/>
            <person name="Anderson I."/>
            <person name="Galleron N."/>
            <person name="Candelon B."/>
            <person name="Kapatral V."/>
            <person name="Bhattacharyya A."/>
            <person name="Reznik G."/>
            <person name="Mikhailova N."/>
            <person name="Lapidus A."/>
            <person name="Chu L."/>
            <person name="Mazur M."/>
            <person name="Goltsman E."/>
            <person name="Larsen N."/>
            <person name="D'Souza M."/>
            <person name="Walunas T."/>
            <person name="Grechkin Y."/>
            <person name="Pusch G."/>
            <person name="Haselkorn R."/>
            <person name="Fonstein M."/>
            <person name="Ehrlich S.D."/>
            <person name="Overbeek R."/>
            <person name="Kyrpides N.C."/>
        </authorList>
    </citation>
    <scope>NUCLEOTIDE SEQUENCE [LARGE SCALE GENOMIC DNA]</scope>
    <source>
        <strain>ATCC 14579 / DSM 31 / CCUG 7414 / JCM 2152 / NBRC 15305 / NCIMB 9373 / NCTC 2599 / NRRL B-3711</strain>
    </source>
</reference>
<protein>
    <recommendedName>
        <fullName evidence="1">Putative membrane protein insertion efficiency factor</fullName>
    </recommendedName>
</protein>
<dbReference type="EMBL" id="AE016877">
    <property type="protein sequence ID" value="AAP11693.1"/>
    <property type="molecule type" value="Genomic_DNA"/>
</dbReference>
<dbReference type="RefSeq" id="NP_834492.1">
    <property type="nucleotide sequence ID" value="NC_004722.1"/>
</dbReference>
<dbReference type="STRING" id="226900.BC_4790"/>
<dbReference type="KEGG" id="bce:BC4790"/>
<dbReference type="PATRIC" id="fig|226900.8.peg.4957"/>
<dbReference type="HOGENOM" id="CLU_144811_6_0_9"/>
<dbReference type="OrthoDB" id="9801753at2"/>
<dbReference type="Proteomes" id="UP000001417">
    <property type="component" value="Chromosome"/>
</dbReference>
<dbReference type="GO" id="GO:0005886">
    <property type="term" value="C:plasma membrane"/>
    <property type="evidence" value="ECO:0007669"/>
    <property type="project" value="UniProtKB-SubCell"/>
</dbReference>
<dbReference type="HAMAP" id="MF_00386">
    <property type="entry name" value="UPF0161_YidD"/>
    <property type="match status" value="1"/>
</dbReference>
<dbReference type="InterPro" id="IPR002696">
    <property type="entry name" value="Membr_insert_effic_factor_YidD"/>
</dbReference>
<dbReference type="NCBIfam" id="TIGR00278">
    <property type="entry name" value="membrane protein insertion efficiency factor YidD"/>
    <property type="match status" value="1"/>
</dbReference>
<dbReference type="PANTHER" id="PTHR33383">
    <property type="entry name" value="MEMBRANE PROTEIN INSERTION EFFICIENCY FACTOR-RELATED"/>
    <property type="match status" value="1"/>
</dbReference>
<dbReference type="PANTHER" id="PTHR33383:SF1">
    <property type="entry name" value="MEMBRANE PROTEIN INSERTION EFFICIENCY FACTOR-RELATED"/>
    <property type="match status" value="1"/>
</dbReference>
<dbReference type="Pfam" id="PF01809">
    <property type="entry name" value="YidD"/>
    <property type="match status" value="1"/>
</dbReference>
<dbReference type="SMART" id="SM01234">
    <property type="entry name" value="Haemolytic"/>
    <property type="match status" value="1"/>
</dbReference>
<accession>Q812M8</accession>